<keyword id="KW-0479">Metal-binding</keyword>
<keyword id="KW-0507">mRNA processing</keyword>
<keyword id="KW-0508">mRNA splicing</keyword>
<keyword id="KW-0539">Nucleus</keyword>
<keyword id="KW-1185">Reference proteome</keyword>
<keyword id="KW-0747">Spliceosome</keyword>
<keyword id="KW-0862">Zinc</keyword>
<keyword id="KW-0863">Zinc-finger</keyword>
<name>SLU7_YARLI</name>
<gene>
    <name type="primary">SLU7</name>
    <name type="ordered locus">YALI0D08624g</name>
</gene>
<sequence length="416" mass="46937">MSKPATTLDGLQDGSVELQKRLSAKRDAEGELKHEEDRKLRKEGKTQTPVTNQEGDVLNPYIPRFMSSAPWYAKAGDDDPSASSLDHLKKDKTDSKKEEWYARGQDRSSLERPKKFRKGACENCGAMTHKKKDCMERPRKVGAKYKADNLQADDVISNPHMSWDSKRDRWNGYDAEDFKRVIDEHNMTEELQKKLHGDAPAETDAEKAAAVEEAIRKSTRTLRLREDTAVYLKDLNSETVYNPGSRTFRTADEGYIDKDGMFVRHTTGEGKEMEELTRIAEAESALGNQIHLHANPTAAAIAAKRIKEEAEKAKDAEKRALEEKYGKQDHVRVRPKEYTSVVTAKKPTVIRAKNAQGIAVSKYEEDVFPGNHTSVWGSYYDKETAKWGYACCHCLIKNGYCVGEKGKKKKGAMDTV</sequence>
<protein>
    <recommendedName>
        <fullName>Pre-mRNA-splicing factor SLU7</fullName>
    </recommendedName>
</protein>
<proteinExistence type="inferred from homology"/>
<reference key="1">
    <citation type="journal article" date="2004" name="Nature">
        <title>Genome evolution in yeasts.</title>
        <authorList>
            <person name="Dujon B."/>
            <person name="Sherman D."/>
            <person name="Fischer G."/>
            <person name="Durrens P."/>
            <person name="Casaregola S."/>
            <person name="Lafontaine I."/>
            <person name="de Montigny J."/>
            <person name="Marck C."/>
            <person name="Neuveglise C."/>
            <person name="Talla E."/>
            <person name="Goffard N."/>
            <person name="Frangeul L."/>
            <person name="Aigle M."/>
            <person name="Anthouard V."/>
            <person name="Babour A."/>
            <person name="Barbe V."/>
            <person name="Barnay S."/>
            <person name="Blanchin S."/>
            <person name="Beckerich J.-M."/>
            <person name="Beyne E."/>
            <person name="Bleykasten C."/>
            <person name="Boisrame A."/>
            <person name="Boyer J."/>
            <person name="Cattolico L."/>
            <person name="Confanioleri F."/>
            <person name="de Daruvar A."/>
            <person name="Despons L."/>
            <person name="Fabre E."/>
            <person name="Fairhead C."/>
            <person name="Ferry-Dumazet H."/>
            <person name="Groppi A."/>
            <person name="Hantraye F."/>
            <person name="Hennequin C."/>
            <person name="Jauniaux N."/>
            <person name="Joyet P."/>
            <person name="Kachouri R."/>
            <person name="Kerrest A."/>
            <person name="Koszul R."/>
            <person name="Lemaire M."/>
            <person name="Lesur I."/>
            <person name="Ma L."/>
            <person name="Muller H."/>
            <person name="Nicaud J.-M."/>
            <person name="Nikolski M."/>
            <person name="Oztas S."/>
            <person name="Ozier-Kalogeropoulos O."/>
            <person name="Pellenz S."/>
            <person name="Potier S."/>
            <person name="Richard G.-F."/>
            <person name="Straub M.-L."/>
            <person name="Suleau A."/>
            <person name="Swennen D."/>
            <person name="Tekaia F."/>
            <person name="Wesolowski-Louvel M."/>
            <person name="Westhof E."/>
            <person name="Wirth B."/>
            <person name="Zeniou-Meyer M."/>
            <person name="Zivanovic Y."/>
            <person name="Bolotin-Fukuhara M."/>
            <person name="Thierry A."/>
            <person name="Bouchier C."/>
            <person name="Caudron B."/>
            <person name="Scarpelli C."/>
            <person name="Gaillardin C."/>
            <person name="Weissenbach J."/>
            <person name="Wincker P."/>
            <person name="Souciet J.-L."/>
        </authorList>
    </citation>
    <scope>NUCLEOTIDE SEQUENCE [LARGE SCALE GENOMIC DNA]</scope>
    <source>
        <strain>CLIB 122 / E 150</strain>
    </source>
</reference>
<accession>Q6C9T0</accession>
<feature type="chain" id="PRO_0000218553" description="Pre-mRNA-splicing factor SLU7">
    <location>
        <begin position="1"/>
        <end position="416"/>
    </location>
</feature>
<feature type="zinc finger region" description="CCHC-type">
    <location>
        <begin position="119"/>
        <end position="136"/>
    </location>
</feature>
<feature type="region of interest" description="Disordered" evidence="2">
    <location>
        <begin position="1"/>
        <end position="114"/>
    </location>
</feature>
<feature type="compositionally biased region" description="Basic and acidic residues" evidence="2">
    <location>
        <begin position="18"/>
        <end position="45"/>
    </location>
</feature>
<feature type="compositionally biased region" description="Basic and acidic residues" evidence="2">
    <location>
        <begin position="86"/>
        <end position="113"/>
    </location>
</feature>
<dbReference type="EMBL" id="CR382130">
    <property type="protein sequence ID" value="CAG80770.1"/>
    <property type="molecule type" value="Genomic_DNA"/>
</dbReference>
<dbReference type="RefSeq" id="XP_502582.1">
    <property type="nucleotide sequence ID" value="XM_502582.1"/>
</dbReference>
<dbReference type="SMR" id="Q6C9T0"/>
<dbReference type="FunCoup" id="Q6C9T0">
    <property type="interactions" value="514"/>
</dbReference>
<dbReference type="STRING" id="284591.Q6C9T0"/>
<dbReference type="EnsemblFungi" id="CAG80770">
    <property type="protein sequence ID" value="CAG80770"/>
    <property type="gene ID" value="YALI0_D08624g"/>
</dbReference>
<dbReference type="KEGG" id="yli:2910713"/>
<dbReference type="VEuPathDB" id="FungiDB:YALI0_D08624g"/>
<dbReference type="HOGENOM" id="CLU_019317_3_1_1"/>
<dbReference type="InParanoid" id="Q6C9T0"/>
<dbReference type="OMA" id="KYAWESQ"/>
<dbReference type="OrthoDB" id="10723at4891"/>
<dbReference type="Proteomes" id="UP000001300">
    <property type="component" value="Chromosome D"/>
</dbReference>
<dbReference type="GO" id="GO:0005681">
    <property type="term" value="C:spliceosomal complex"/>
    <property type="evidence" value="ECO:0000318"/>
    <property type="project" value="GO_Central"/>
</dbReference>
<dbReference type="GO" id="GO:0030628">
    <property type="term" value="F:pre-mRNA 3'-splice site binding"/>
    <property type="evidence" value="ECO:0007669"/>
    <property type="project" value="InterPro"/>
</dbReference>
<dbReference type="GO" id="GO:0008270">
    <property type="term" value="F:zinc ion binding"/>
    <property type="evidence" value="ECO:0007669"/>
    <property type="project" value="UniProtKB-KW"/>
</dbReference>
<dbReference type="GO" id="GO:0000398">
    <property type="term" value="P:mRNA splicing, via spliceosome"/>
    <property type="evidence" value="ECO:0007669"/>
    <property type="project" value="InterPro"/>
</dbReference>
<dbReference type="GO" id="GO:0008380">
    <property type="term" value="P:RNA splicing"/>
    <property type="evidence" value="ECO:0000318"/>
    <property type="project" value="GO_Central"/>
</dbReference>
<dbReference type="InterPro" id="IPR021715">
    <property type="entry name" value="Slu7_dom"/>
</dbReference>
<dbReference type="InterPro" id="IPR039974">
    <property type="entry name" value="Splicing_factor_SLU7"/>
</dbReference>
<dbReference type="PANTHER" id="PTHR12942:SF2">
    <property type="entry name" value="PRE-MRNA-SPLICING FACTOR SLU7"/>
    <property type="match status" value="1"/>
</dbReference>
<dbReference type="PANTHER" id="PTHR12942">
    <property type="entry name" value="STEP II SPLICING FACTOR SLU7"/>
    <property type="match status" value="1"/>
</dbReference>
<dbReference type="Pfam" id="PF11708">
    <property type="entry name" value="Slu7"/>
    <property type="match status" value="1"/>
</dbReference>
<organism>
    <name type="scientific">Yarrowia lipolytica (strain CLIB 122 / E 150)</name>
    <name type="common">Yeast</name>
    <name type="synonym">Candida lipolytica</name>
    <dbReference type="NCBI Taxonomy" id="284591"/>
    <lineage>
        <taxon>Eukaryota</taxon>
        <taxon>Fungi</taxon>
        <taxon>Dikarya</taxon>
        <taxon>Ascomycota</taxon>
        <taxon>Saccharomycotina</taxon>
        <taxon>Dipodascomycetes</taxon>
        <taxon>Dipodascales</taxon>
        <taxon>Dipodascales incertae sedis</taxon>
        <taxon>Yarrowia</taxon>
    </lineage>
</organism>
<evidence type="ECO:0000250" key="1"/>
<evidence type="ECO:0000256" key="2">
    <source>
        <dbReference type="SAM" id="MobiDB-lite"/>
    </source>
</evidence>
<evidence type="ECO:0000305" key="3"/>
<comment type="function">
    <text evidence="1">Involved in pre-mRNA splicing.</text>
</comment>
<comment type="subunit">
    <text evidence="1">Associated with the spliceosome.</text>
</comment>
<comment type="subcellular location">
    <subcellularLocation>
        <location evidence="1">Nucleus</location>
    </subcellularLocation>
</comment>
<comment type="similarity">
    <text evidence="3">Belongs to the SLU7 family.</text>
</comment>